<feature type="chain" id="PRO_0000355461" description="Cytochrome b6-f complex subunit 8">
    <location>
        <begin position="1"/>
        <end position="29"/>
    </location>
</feature>
<feature type="transmembrane region" description="Helical" evidence="1">
    <location>
        <begin position="3"/>
        <end position="23"/>
    </location>
</feature>
<accession>B2Y1V4</accession>
<accession>B7ZI54</accession>
<keyword id="KW-0150">Chloroplast</keyword>
<keyword id="KW-0249">Electron transport</keyword>
<keyword id="KW-0472">Membrane</keyword>
<keyword id="KW-0602">Photosynthesis</keyword>
<keyword id="KW-0934">Plastid</keyword>
<keyword id="KW-0793">Thylakoid</keyword>
<keyword id="KW-0812">Transmembrane</keyword>
<keyword id="KW-1133">Transmembrane helix</keyword>
<keyword id="KW-0813">Transport</keyword>
<comment type="function">
    <text evidence="1">Component of the cytochrome b6-f complex, which mediates electron transfer between photosystem II (PSII) and photosystem I (PSI), cyclic electron flow around PSI, and state transitions.</text>
</comment>
<comment type="subunit">
    <text evidence="1">The 4 large subunits of the cytochrome b6-f complex are cytochrome b6, subunit IV (17 kDa polypeptide, PetD), cytochrome f and the Rieske protein, while the 4 small subunits are PetG, PetL, PetM and PetN. The complex functions as a dimer.</text>
</comment>
<comment type="subcellular location">
    <subcellularLocation>
        <location evidence="1">Plastid</location>
        <location evidence="1">Chloroplast thylakoid membrane</location>
        <topology evidence="1">Single-pass membrane protein</topology>
    </subcellularLocation>
</comment>
<comment type="similarity">
    <text evidence="1">Belongs to the PetN family.</text>
</comment>
<geneLocation type="chloroplast"/>
<evidence type="ECO:0000255" key="1">
    <source>
        <dbReference type="HAMAP-Rule" id="MF_00395"/>
    </source>
</evidence>
<sequence length="29" mass="3197">MNIVDIAWAALMVVFTFSLSLVVWGRSGL</sequence>
<reference key="1">
    <citation type="journal article" date="2008" name="BMC Evol. Biol.">
        <title>The complete plastid genome sequence of Welwitschia mirabilis: an unusually compact plastome with accelerated divergence rates.</title>
        <authorList>
            <person name="McCoy S.R."/>
            <person name="Kuehl J.V."/>
            <person name="Boore J.L."/>
            <person name="Raubeson L.A."/>
        </authorList>
    </citation>
    <scope>NUCLEOTIDE SEQUENCE [LARGE SCALE GENOMIC DNA]</scope>
</reference>
<reference key="2">
    <citation type="journal article" date="2009" name="Mol. Phylogenet. Evol.">
        <title>Evolution of reduced and compact chloroplast genomes (cpDNAs) in gnetophytes: Selection toward a lower-cost strategy.</title>
        <authorList>
            <person name="Wu C.-S."/>
            <person name="Lai Y.-T."/>
            <person name="Lin C.-P."/>
            <person name="Wang Y.-N."/>
            <person name="Chaw S.-M."/>
        </authorList>
    </citation>
    <scope>NUCLEOTIDE SEQUENCE [LARGE SCALE GENOMIC DNA]</scope>
</reference>
<gene>
    <name evidence="1" type="primary">petN</name>
</gene>
<organism>
    <name type="scientific">Welwitschia mirabilis</name>
    <name type="common">Tree tumbo</name>
    <name type="synonym">Welwitschia bainesii</name>
    <dbReference type="NCBI Taxonomy" id="3377"/>
    <lineage>
        <taxon>Eukaryota</taxon>
        <taxon>Viridiplantae</taxon>
        <taxon>Streptophyta</taxon>
        <taxon>Embryophyta</taxon>
        <taxon>Tracheophyta</taxon>
        <taxon>Spermatophyta</taxon>
        <taxon>Gnetopsida</taxon>
        <taxon>Gnetidae</taxon>
        <taxon>Welwitschiales</taxon>
        <taxon>Welwitschiaceae</taxon>
        <taxon>Welwitschia</taxon>
    </lineage>
</organism>
<proteinExistence type="inferred from homology"/>
<protein>
    <recommendedName>
        <fullName evidence="1">Cytochrome b6-f complex subunit 8</fullName>
    </recommendedName>
    <alternativeName>
        <fullName evidence="1">Cytochrome b6-f complex subunit PetN</fullName>
    </alternativeName>
    <alternativeName>
        <fullName evidence="1">Cytochrome b6-f complex subunit VIII</fullName>
    </alternativeName>
</protein>
<name>PETN_WELMI</name>
<dbReference type="EMBL" id="EU342371">
    <property type="protein sequence ID" value="ABY26784.1"/>
    <property type="molecule type" value="Genomic_DNA"/>
</dbReference>
<dbReference type="EMBL" id="AP009568">
    <property type="protein sequence ID" value="BAH11234.1"/>
    <property type="molecule type" value="Genomic_DNA"/>
</dbReference>
<dbReference type="RefSeq" id="YP_001876571.1">
    <property type="nucleotide sequence ID" value="NC_010654.1"/>
</dbReference>
<dbReference type="SMR" id="B2Y1V4"/>
<dbReference type="GeneID" id="6276203"/>
<dbReference type="GO" id="GO:0009535">
    <property type="term" value="C:chloroplast thylakoid membrane"/>
    <property type="evidence" value="ECO:0007669"/>
    <property type="project" value="UniProtKB-SubCell"/>
</dbReference>
<dbReference type="GO" id="GO:0009512">
    <property type="term" value="C:cytochrome b6f complex"/>
    <property type="evidence" value="ECO:0007669"/>
    <property type="project" value="InterPro"/>
</dbReference>
<dbReference type="GO" id="GO:0045158">
    <property type="term" value="F:electron transporter, transferring electrons within cytochrome b6/f complex of photosystem II activity"/>
    <property type="evidence" value="ECO:0007669"/>
    <property type="project" value="InterPro"/>
</dbReference>
<dbReference type="GO" id="GO:0017004">
    <property type="term" value="P:cytochrome complex assembly"/>
    <property type="evidence" value="ECO:0007669"/>
    <property type="project" value="UniProtKB-UniRule"/>
</dbReference>
<dbReference type="GO" id="GO:0015979">
    <property type="term" value="P:photosynthesis"/>
    <property type="evidence" value="ECO:0007669"/>
    <property type="project" value="UniProtKB-KW"/>
</dbReference>
<dbReference type="HAMAP" id="MF_00395">
    <property type="entry name" value="Cytb6_f_PetN"/>
    <property type="match status" value="1"/>
</dbReference>
<dbReference type="InterPro" id="IPR036143">
    <property type="entry name" value="Cytochr_b6-f_cplx_su8_sf"/>
</dbReference>
<dbReference type="InterPro" id="IPR005497">
    <property type="entry name" value="Cytochrome_b6-f_cplx_su8"/>
</dbReference>
<dbReference type="Pfam" id="PF03742">
    <property type="entry name" value="PetN"/>
    <property type="match status" value="1"/>
</dbReference>
<dbReference type="SUPFAM" id="SSF103451">
    <property type="entry name" value="PetN subunit of the cytochrome b6f complex"/>
    <property type="match status" value="1"/>
</dbReference>